<keyword id="KW-0997">Cell inner membrane</keyword>
<keyword id="KW-1003">Cell membrane</keyword>
<keyword id="KW-0460">Magnesium</keyword>
<keyword id="KW-0472">Membrane</keyword>
<keyword id="KW-1185">Reference proteome</keyword>
<keyword id="KW-0808">Transferase</keyword>
<keyword id="KW-0812">Transmembrane</keyword>
<keyword id="KW-1133">Transmembrane helix</keyword>
<keyword id="KW-0831">Ubiquinone biosynthesis</keyword>
<protein>
    <recommendedName>
        <fullName evidence="1">4-hydroxybenzoate octaprenyltransferase</fullName>
        <ecNumber evidence="1">2.5.1.39</ecNumber>
    </recommendedName>
    <alternativeName>
        <fullName evidence="1">4-HB polyprenyltransferase</fullName>
    </alternativeName>
</protein>
<organism>
    <name type="scientific">Shewanella pealeana (strain ATCC 700345 / ANG-SQ1)</name>
    <dbReference type="NCBI Taxonomy" id="398579"/>
    <lineage>
        <taxon>Bacteria</taxon>
        <taxon>Pseudomonadati</taxon>
        <taxon>Pseudomonadota</taxon>
        <taxon>Gammaproteobacteria</taxon>
        <taxon>Alteromonadales</taxon>
        <taxon>Shewanellaceae</taxon>
        <taxon>Shewanella</taxon>
    </lineage>
</organism>
<dbReference type="EC" id="2.5.1.39" evidence="1"/>
<dbReference type="EMBL" id="CP000851">
    <property type="protein sequence ID" value="ABV85797.1"/>
    <property type="molecule type" value="Genomic_DNA"/>
</dbReference>
<dbReference type="RefSeq" id="WP_012153735.1">
    <property type="nucleotide sequence ID" value="NC_009901.1"/>
</dbReference>
<dbReference type="SMR" id="A8GZR0"/>
<dbReference type="STRING" id="398579.Spea_0469"/>
<dbReference type="KEGG" id="spl:Spea_0469"/>
<dbReference type="eggNOG" id="COG0382">
    <property type="taxonomic scope" value="Bacteria"/>
</dbReference>
<dbReference type="HOGENOM" id="CLU_034879_1_0_6"/>
<dbReference type="OrthoDB" id="9782418at2"/>
<dbReference type="UniPathway" id="UPA00232"/>
<dbReference type="Proteomes" id="UP000002608">
    <property type="component" value="Chromosome"/>
</dbReference>
<dbReference type="GO" id="GO:0005886">
    <property type="term" value="C:plasma membrane"/>
    <property type="evidence" value="ECO:0007669"/>
    <property type="project" value="UniProtKB-SubCell"/>
</dbReference>
<dbReference type="GO" id="GO:0008412">
    <property type="term" value="F:4-hydroxybenzoate polyprenyltransferase activity"/>
    <property type="evidence" value="ECO:0007669"/>
    <property type="project" value="UniProtKB-UniRule"/>
</dbReference>
<dbReference type="GO" id="GO:0006744">
    <property type="term" value="P:ubiquinone biosynthetic process"/>
    <property type="evidence" value="ECO:0007669"/>
    <property type="project" value="UniProtKB-UniRule"/>
</dbReference>
<dbReference type="CDD" id="cd13959">
    <property type="entry name" value="PT_UbiA_COQ2"/>
    <property type="match status" value="1"/>
</dbReference>
<dbReference type="FunFam" id="1.10.357.140:FF:000002">
    <property type="entry name" value="4-hydroxybenzoate octaprenyltransferase"/>
    <property type="match status" value="1"/>
</dbReference>
<dbReference type="FunFam" id="1.20.120.1780:FF:000001">
    <property type="entry name" value="4-hydroxybenzoate octaprenyltransferase"/>
    <property type="match status" value="1"/>
</dbReference>
<dbReference type="Gene3D" id="1.10.357.140">
    <property type="entry name" value="UbiA prenyltransferase"/>
    <property type="match status" value="1"/>
</dbReference>
<dbReference type="Gene3D" id="1.20.120.1780">
    <property type="entry name" value="UbiA prenyltransferase"/>
    <property type="match status" value="1"/>
</dbReference>
<dbReference type="HAMAP" id="MF_01635">
    <property type="entry name" value="UbiA"/>
    <property type="match status" value="1"/>
</dbReference>
<dbReference type="InterPro" id="IPR006370">
    <property type="entry name" value="HB_polyprenyltransferase-like"/>
</dbReference>
<dbReference type="InterPro" id="IPR039653">
    <property type="entry name" value="Prenyltransferase"/>
</dbReference>
<dbReference type="InterPro" id="IPR000537">
    <property type="entry name" value="UbiA_prenyltransferase"/>
</dbReference>
<dbReference type="InterPro" id="IPR030470">
    <property type="entry name" value="UbiA_prenylTrfase_CS"/>
</dbReference>
<dbReference type="InterPro" id="IPR044878">
    <property type="entry name" value="UbiA_sf"/>
</dbReference>
<dbReference type="NCBIfam" id="TIGR01474">
    <property type="entry name" value="ubiA_proteo"/>
    <property type="match status" value="1"/>
</dbReference>
<dbReference type="PANTHER" id="PTHR11048:SF28">
    <property type="entry name" value="4-HYDROXYBENZOATE POLYPRENYLTRANSFERASE, MITOCHONDRIAL"/>
    <property type="match status" value="1"/>
</dbReference>
<dbReference type="PANTHER" id="PTHR11048">
    <property type="entry name" value="PRENYLTRANSFERASES"/>
    <property type="match status" value="1"/>
</dbReference>
<dbReference type="Pfam" id="PF01040">
    <property type="entry name" value="UbiA"/>
    <property type="match status" value="1"/>
</dbReference>
<dbReference type="PROSITE" id="PS00943">
    <property type="entry name" value="UBIA"/>
    <property type="match status" value="1"/>
</dbReference>
<accession>A8GZR0</accession>
<gene>
    <name evidence="1" type="primary">ubiA</name>
    <name type="ordered locus">Spea_0469</name>
</gene>
<comment type="function">
    <text evidence="1">Catalyzes the prenylation of para-hydroxybenzoate (PHB) with an all-trans polyprenyl group. Mediates the second step in the final reaction sequence of ubiquinone-8 (UQ-8) biosynthesis, which is the condensation of the polyisoprenoid side chain with PHB, generating the first membrane-bound Q intermediate 3-octaprenyl-4-hydroxybenzoate.</text>
</comment>
<comment type="catalytic activity">
    <reaction evidence="1">
        <text>all-trans-octaprenyl diphosphate + 4-hydroxybenzoate = 4-hydroxy-3-(all-trans-octaprenyl)benzoate + diphosphate</text>
        <dbReference type="Rhea" id="RHEA:27782"/>
        <dbReference type="ChEBI" id="CHEBI:1617"/>
        <dbReference type="ChEBI" id="CHEBI:17879"/>
        <dbReference type="ChEBI" id="CHEBI:33019"/>
        <dbReference type="ChEBI" id="CHEBI:57711"/>
        <dbReference type="EC" id="2.5.1.39"/>
    </reaction>
</comment>
<comment type="cofactor">
    <cofactor evidence="1">
        <name>Mg(2+)</name>
        <dbReference type="ChEBI" id="CHEBI:18420"/>
    </cofactor>
</comment>
<comment type="pathway">
    <text evidence="1">Cofactor biosynthesis; ubiquinone biosynthesis.</text>
</comment>
<comment type="subcellular location">
    <subcellularLocation>
        <location evidence="1">Cell inner membrane</location>
        <topology evidence="1">Multi-pass membrane protein</topology>
    </subcellularLocation>
</comment>
<comment type="similarity">
    <text evidence="1">Belongs to the UbiA prenyltransferase family.</text>
</comment>
<feature type="chain" id="PRO_1000088184" description="4-hydroxybenzoate octaprenyltransferase">
    <location>
        <begin position="1"/>
        <end position="288"/>
    </location>
</feature>
<feature type="transmembrane region" description="Helical" evidence="1">
    <location>
        <begin position="20"/>
        <end position="40"/>
    </location>
</feature>
<feature type="transmembrane region" description="Helical" evidence="1">
    <location>
        <begin position="43"/>
        <end position="63"/>
    </location>
</feature>
<feature type="transmembrane region" description="Helical" evidence="1">
    <location>
        <begin position="96"/>
        <end position="116"/>
    </location>
</feature>
<feature type="transmembrane region" description="Helical" evidence="1">
    <location>
        <begin position="210"/>
        <end position="230"/>
    </location>
</feature>
<feature type="transmembrane region" description="Helical" evidence="1">
    <location>
        <begin position="234"/>
        <end position="254"/>
    </location>
</feature>
<feature type="transmembrane region" description="Helical" evidence="1">
    <location>
        <begin position="262"/>
        <end position="282"/>
    </location>
</feature>
<reference key="1">
    <citation type="submission" date="2007-10" db="EMBL/GenBank/DDBJ databases">
        <title>Complete sequence of Shewanella pealeana ATCC 700345.</title>
        <authorList>
            <consortium name="US DOE Joint Genome Institute"/>
            <person name="Copeland A."/>
            <person name="Lucas S."/>
            <person name="Lapidus A."/>
            <person name="Barry K."/>
            <person name="Glavina del Rio T."/>
            <person name="Dalin E."/>
            <person name="Tice H."/>
            <person name="Pitluck S."/>
            <person name="Chertkov O."/>
            <person name="Brettin T."/>
            <person name="Bruce D."/>
            <person name="Detter J.C."/>
            <person name="Han C."/>
            <person name="Schmutz J."/>
            <person name="Larimer F."/>
            <person name="Land M."/>
            <person name="Hauser L."/>
            <person name="Kyrpides N."/>
            <person name="Kim E."/>
            <person name="Zhao J.-S.Z."/>
            <person name="Manno D."/>
            <person name="Hawari J."/>
            <person name="Richardson P."/>
        </authorList>
    </citation>
    <scope>NUCLEOTIDE SEQUENCE [LARGE SCALE GENOMIC DNA]</scope>
    <source>
        <strain>ATCC 700345 / ANG-SQ1</strain>
    </source>
</reference>
<proteinExistence type="inferred from homology"/>
<evidence type="ECO:0000255" key="1">
    <source>
        <dbReference type="HAMAP-Rule" id="MF_01635"/>
    </source>
</evidence>
<name>UBIA_SHEPA</name>
<sequence>MNLRDKLDVYMRLARMDRPIGTLLLLWPCLMALTFAAGGLPDLKVFIIFVIGVFSMRACGCIINDYADRKLDAHVERTKGRPLASGEVSSKEALLLFVVMALFSFGLVLMLNPLVVQLSVIGIILTIIYPFTKRYTNMPQMFLGTVWSWSIPMAYAAQTGTVPVEAWWLFAANWCWTVAYDTMYAMVDRDDDLKVGIKSTAILFGRYDRQIIGLFQLAALSCFIIAGMVADRGAIYAVGILAFIGFGLYQQKLINGRERAPCFTAFLNNNWAGMVLFTALMLDYLVLG</sequence>